<sequence>MMFAYLPPDLESEILSRVPATFLKELQTTCKRWYALFRDPIFVKKNLGKAATHVIFNNLGDYSVTEMNTLVHSINLRGIQNSFDPSIGVERKLYELNDPEHDKILGIISHCDGLLLCATKDKTRLVVWNPCTGQTRWIQIKNVFKNNPQLILLVIKFKIYEFNSDSWRILDDISPVCFIRSNGVNLKGNAYFVASDKESKFILKFDFTTERFLRLSFPSQNDDQIAVLSVVRQEKLALLQQRFDTSSIKMNIWVTKTKIDADKDLSWSNFLVVDFGKVTLTSEPLSFLVDEENKMVVCSSKIRHIERKTIIYFAKEGIQVHQEIAQKPKGCCSFLVSYVPSLVQF</sequence>
<organism>
    <name type="scientific">Arabidopsis thaliana</name>
    <name type="common">Mouse-ear cress</name>
    <dbReference type="NCBI Taxonomy" id="3702"/>
    <lineage>
        <taxon>Eukaryota</taxon>
        <taxon>Viridiplantae</taxon>
        <taxon>Streptophyta</taxon>
        <taxon>Embryophyta</taxon>
        <taxon>Tracheophyta</taxon>
        <taxon>Spermatophyta</taxon>
        <taxon>Magnoliopsida</taxon>
        <taxon>eudicotyledons</taxon>
        <taxon>Gunneridae</taxon>
        <taxon>Pentapetalae</taxon>
        <taxon>rosids</taxon>
        <taxon>malvids</taxon>
        <taxon>Brassicales</taxon>
        <taxon>Brassicaceae</taxon>
        <taxon>Camelineae</taxon>
        <taxon>Arabidopsis</taxon>
    </lineage>
</organism>
<feature type="chain" id="PRO_0000283418" description="Putative F-box protein At3g17265">
    <location>
        <begin position="1"/>
        <end position="345"/>
    </location>
</feature>
<feature type="domain" description="F-box" evidence="1">
    <location>
        <begin position="1"/>
        <end position="46"/>
    </location>
</feature>
<comment type="sequence caution" evidence="2">
    <conflict type="erroneous gene model prediction">
        <sequence resource="EMBL-CDS" id="BAB02730"/>
    </conflict>
</comment>
<proteinExistence type="predicted"/>
<keyword id="KW-1185">Reference proteome</keyword>
<gene>
    <name type="ordered locus">At3g17265</name>
    <name type="ORF">MGD8.10</name>
</gene>
<name>FB148_ARATH</name>
<evidence type="ECO:0000255" key="1">
    <source>
        <dbReference type="PROSITE-ProRule" id="PRU00080"/>
    </source>
</evidence>
<evidence type="ECO:0000305" key="2"/>
<accession>Q9LUU5</accession>
<reference key="1">
    <citation type="journal article" date="2000" name="DNA Res.">
        <title>Structural analysis of Arabidopsis thaliana chromosome 3. I. Sequence features of the regions of 4,504,864 bp covered by sixty P1 and TAC clones.</title>
        <authorList>
            <person name="Sato S."/>
            <person name="Nakamura Y."/>
            <person name="Kaneko T."/>
            <person name="Katoh T."/>
            <person name="Asamizu E."/>
            <person name="Tabata S."/>
        </authorList>
    </citation>
    <scope>NUCLEOTIDE SEQUENCE [LARGE SCALE GENOMIC DNA]</scope>
    <source>
        <strain>cv. Columbia</strain>
    </source>
</reference>
<reference key="2">
    <citation type="journal article" date="2017" name="Plant J.">
        <title>Araport11: a complete reannotation of the Arabidopsis thaliana reference genome.</title>
        <authorList>
            <person name="Cheng C.Y."/>
            <person name="Krishnakumar V."/>
            <person name="Chan A.P."/>
            <person name="Thibaud-Nissen F."/>
            <person name="Schobel S."/>
            <person name="Town C.D."/>
        </authorList>
    </citation>
    <scope>GENOME REANNOTATION</scope>
    <source>
        <strain>cv. Columbia</strain>
    </source>
</reference>
<protein>
    <recommendedName>
        <fullName>Putative F-box protein At3g17265</fullName>
    </recommendedName>
</protein>
<dbReference type="EMBL" id="AB022216">
    <property type="protein sequence ID" value="BAB02730.1"/>
    <property type="status" value="ALT_SEQ"/>
    <property type="molecule type" value="Genomic_DNA"/>
</dbReference>
<dbReference type="EMBL" id="CP002686">
    <property type="protein sequence ID" value="AEE75930.1"/>
    <property type="molecule type" value="Genomic_DNA"/>
</dbReference>
<dbReference type="RefSeq" id="NP_850602.1">
    <property type="nucleotide sequence ID" value="NM_180271.1"/>
</dbReference>
<dbReference type="STRING" id="3702.Q9LUU5"/>
<dbReference type="PaxDb" id="3702-AT3G17265.1"/>
<dbReference type="EnsemblPlants" id="AT3G17265.1">
    <property type="protein sequence ID" value="AT3G17265.1"/>
    <property type="gene ID" value="AT3G17265"/>
</dbReference>
<dbReference type="GeneID" id="820988"/>
<dbReference type="Gramene" id="AT3G17265.1">
    <property type="protein sequence ID" value="AT3G17265.1"/>
    <property type="gene ID" value="AT3G17265"/>
</dbReference>
<dbReference type="KEGG" id="ath:AT3G17265"/>
<dbReference type="Araport" id="AT3G17265"/>
<dbReference type="TAIR" id="AT3G17265"/>
<dbReference type="HOGENOM" id="CLU_034692_0_0_1"/>
<dbReference type="InParanoid" id="Q9LUU5"/>
<dbReference type="OMA" id="FAYLPPD"/>
<dbReference type="PhylomeDB" id="Q9LUU5"/>
<dbReference type="PRO" id="PR:Q9LUU5"/>
<dbReference type="Proteomes" id="UP000006548">
    <property type="component" value="Chromosome 3"/>
</dbReference>
<dbReference type="ExpressionAtlas" id="Q9LUU5">
    <property type="expression patterns" value="baseline"/>
</dbReference>
<dbReference type="Gene3D" id="1.20.1280.50">
    <property type="match status" value="1"/>
</dbReference>
<dbReference type="InterPro" id="IPR006527">
    <property type="entry name" value="F-box-assoc_dom_typ1"/>
</dbReference>
<dbReference type="InterPro" id="IPR017451">
    <property type="entry name" value="F-box-assoc_interact_dom"/>
</dbReference>
<dbReference type="InterPro" id="IPR036047">
    <property type="entry name" value="F-box-like_dom_sf"/>
</dbReference>
<dbReference type="InterPro" id="IPR001810">
    <property type="entry name" value="F-box_dom"/>
</dbReference>
<dbReference type="InterPro" id="IPR050796">
    <property type="entry name" value="SCF_F-box_component"/>
</dbReference>
<dbReference type="NCBIfam" id="TIGR01640">
    <property type="entry name" value="F_box_assoc_1"/>
    <property type="match status" value="1"/>
</dbReference>
<dbReference type="PANTHER" id="PTHR31672">
    <property type="entry name" value="BNACNNG10540D PROTEIN"/>
    <property type="match status" value="1"/>
</dbReference>
<dbReference type="PANTHER" id="PTHR31672:SF13">
    <property type="entry name" value="F-BOX PROTEIN CPR30-LIKE"/>
    <property type="match status" value="1"/>
</dbReference>
<dbReference type="Pfam" id="PF00646">
    <property type="entry name" value="F-box"/>
    <property type="match status" value="1"/>
</dbReference>
<dbReference type="Pfam" id="PF07734">
    <property type="entry name" value="FBA_1"/>
    <property type="match status" value="1"/>
</dbReference>
<dbReference type="SMART" id="SM00256">
    <property type="entry name" value="FBOX"/>
    <property type="match status" value="1"/>
</dbReference>
<dbReference type="SUPFAM" id="SSF81383">
    <property type="entry name" value="F-box domain"/>
    <property type="match status" value="1"/>
</dbReference>
<dbReference type="PROSITE" id="PS50181">
    <property type="entry name" value="FBOX"/>
    <property type="match status" value="1"/>
</dbReference>